<dbReference type="EMBL" id="AF027868">
    <property type="protein sequence ID" value="AAB84425.1"/>
    <property type="molecule type" value="Genomic_DNA"/>
</dbReference>
<dbReference type="EMBL" id="AL009126">
    <property type="protein sequence ID" value="CAB13769.1"/>
    <property type="molecule type" value="Genomic_DNA"/>
</dbReference>
<dbReference type="PIR" id="G69897">
    <property type="entry name" value="G69897"/>
</dbReference>
<dbReference type="RefSeq" id="NP_389758.1">
    <property type="nucleotide sequence ID" value="NC_000964.3"/>
</dbReference>
<dbReference type="RefSeq" id="WP_004399570.1">
    <property type="nucleotide sequence ID" value="NZ_OZ025638.1"/>
</dbReference>
<dbReference type="SMR" id="O34416"/>
<dbReference type="FunCoup" id="O34416">
    <property type="interactions" value="624"/>
</dbReference>
<dbReference type="STRING" id="224308.BSU18770"/>
<dbReference type="TCDB" id="2.A.7.3.29">
    <property type="family name" value="the drug/metabolite transporter (dmt) superfamily"/>
</dbReference>
<dbReference type="PaxDb" id="224308-BSU18770"/>
<dbReference type="EnsemblBacteria" id="CAB13769">
    <property type="protein sequence ID" value="CAB13769"/>
    <property type="gene ID" value="BSU_18770"/>
</dbReference>
<dbReference type="GeneID" id="940126"/>
<dbReference type="KEGG" id="bsu:BSU18770"/>
<dbReference type="PATRIC" id="fig|224308.179.peg.2046"/>
<dbReference type="eggNOG" id="COG0697">
    <property type="taxonomic scope" value="Bacteria"/>
</dbReference>
<dbReference type="InParanoid" id="O34416"/>
<dbReference type="OrthoDB" id="67135at2"/>
<dbReference type="PhylomeDB" id="O34416"/>
<dbReference type="BioCyc" id="BSUB:BSU18770-MONOMER"/>
<dbReference type="Proteomes" id="UP000001570">
    <property type="component" value="Chromosome"/>
</dbReference>
<dbReference type="GO" id="GO:0005886">
    <property type="term" value="C:plasma membrane"/>
    <property type="evidence" value="ECO:0007669"/>
    <property type="project" value="UniProtKB-SubCell"/>
</dbReference>
<dbReference type="Gene3D" id="1.10.3730.20">
    <property type="match status" value="1"/>
</dbReference>
<dbReference type="InterPro" id="IPR050638">
    <property type="entry name" value="AA-Vitamin_Transporters"/>
</dbReference>
<dbReference type="InterPro" id="IPR000620">
    <property type="entry name" value="EamA_dom"/>
</dbReference>
<dbReference type="PANTHER" id="PTHR32322">
    <property type="entry name" value="INNER MEMBRANE TRANSPORTER"/>
    <property type="match status" value="1"/>
</dbReference>
<dbReference type="PANTHER" id="PTHR32322:SF18">
    <property type="entry name" value="S-ADENOSYLMETHIONINE_S-ADENOSYLHOMOCYSTEINE TRANSPORTER"/>
    <property type="match status" value="1"/>
</dbReference>
<dbReference type="Pfam" id="PF00892">
    <property type="entry name" value="EamA"/>
    <property type="match status" value="2"/>
</dbReference>
<dbReference type="SUPFAM" id="SSF103481">
    <property type="entry name" value="Multidrug resistance efflux transporter EmrE"/>
    <property type="match status" value="2"/>
</dbReference>
<comment type="subcellular location">
    <subcellularLocation>
        <location evidence="2">Cell membrane</location>
        <topology evidence="2">Multi-pass membrane protein</topology>
    </subcellularLocation>
</comment>
<comment type="similarity">
    <text evidence="2">Belongs to the EamA transporter family.</text>
</comment>
<reference key="1">
    <citation type="submission" date="1997-11" db="EMBL/GenBank/DDBJ databases">
        <title>Sequence analysis of the Bacillus subtilis chromosome region between the terC and odhAB loci cloned in a yeast artificial chromosome.</title>
        <authorList>
            <person name="Lapidus A."/>
            <person name="Galleron N."/>
            <person name="Sorokin A."/>
            <person name="Ehrlich S.D."/>
        </authorList>
    </citation>
    <scope>NUCLEOTIDE SEQUENCE [GENOMIC DNA]</scope>
</reference>
<reference key="2">
    <citation type="journal article" date="1997" name="Nature">
        <title>The complete genome sequence of the Gram-positive bacterium Bacillus subtilis.</title>
        <authorList>
            <person name="Kunst F."/>
            <person name="Ogasawara N."/>
            <person name="Moszer I."/>
            <person name="Albertini A.M."/>
            <person name="Alloni G."/>
            <person name="Azevedo V."/>
            <person name="Bertero M.G."/>
            <person name="Bessieres P."/>
            <person name="Bolotin A."/>
            <person name="Borchert S."/>
            <person name="Borriss R."/>
            <person name="Boursier L."/>
            <person name="Brans A."/>
            <person name="Braun M."/>
            <person name="Brignell S.C."/>
            <person name="Bron S."/>
            <person name="Brouillet S."/>
            <person name="Bruschi C.V."/>
            <person name="Caldwell B."/>
            <person name="Capuano V."/>
            <person name="Carter N.M."/>
            <person name="Choi S.-K."/>
            <person name="Codani J.-J."/>
            <person name="Connerton I.F."/>
            <person name="Cummings N.J."/>
            <person name="Daniel R.A."/>
            <person name="Denizot F."/>
            <person name="Devine K.M."/>
            <person name="Duesterhoeft A."/>
            <person name="Ehrlich S.D."/>
            <person name="Emmerson P.T."/>
            <person name="Entian K.-D."/>
            <person name="Errington J."/>
            <person name="Fabret C."/>
            <person name="Ferrari E."/>
            <person name="Foulger D."/>
            <person name="Fritz C."/>
            <person name="Fujita M."/>
            <person name="Fujita Y."/>
            <person name="Fuma S."/>
            <person name="Galizzi A."/>
            <person name="Galleron N."/>
            <person name="Ghim S.-Y."/>
            <person name="Glaser P."/>
            <person name="Goffeau A."/>
            <person name="Golightly E.J."/>
            <person name="Grandi G."/>
            <person name="Guiseppi G."/>
            <person name="Guy B.J."/>
            <person name="Haga K."/>
            <person name="Haiech J."/>
            <person name="Harwood C.R."/>
            <person name="Henaut A."/>
            <person name="Hilbert H."/>
            <person name="Holsappel S."/>
            <person name="Hosono S."/>
            <person name="Hullo M.-F."/>
            <person name="Itaya M."/>
            <person name="Jones L.-M."/>
            <person name="Joris B."/>
            <person name="Karamata D."/>
            <person name="Kasahara Y."/>
            <person name="Klaerr-Blanchard M."/>
            <person name="Klein C."/>
            <person name="Kobayashi Y."/>
            <person name="Koetter P."/>
            <person name="Koningstein G."/>
            <person name="Krogh S."/>
            <person name="Kumano M."/>
            <person name="Kurita K."/>
            <person name="Lapidus A."/>
            <person name="Lardinois S."/>
            <person name="Lauber J."/>
            <person name="Lazarevic V."/>
            <person name="Lee S.-M."/>
            <person name="Levine A."/>
            <person name="Liu H."/>
            <person name="Masuda S."/>
            <person name="Mauel C."/>
            <person name="Medigue C."/>
            <person name="Medina N."/>
            <person name="Mellado R.P."/>
            <person name="Mizuno M."/>
            <person name="Moestl D."/>
            <person name="Nakai S."/>
            <person name="Noback M."/>
            <person name="Noone D."/>
            <person name="O'Reilly M."/>
            <person name="Ogawa K."/>
            <person name="Ogiwara A."/>
            <person name="Oudega B."/>
            <person name="Park S.-H."/>
            <person name="Parro V."/>
            <person name="Pohl T.M."/>
            <person name="Portetelle D."/>
            <person name="Porwollik S."/>
            <person name="Prescott A.M."/>
            <person name="Presecan E."/>
            <person name="Pujic P."/>
            <person name="Purnelle B."/>
            <person name="Rapoport G."/>
            <person name="Rey M."/>
            <person name="Reynolds S."/>
            <person name="Rieger M."/>
            <person name="Rivolta C."/>
            <person name="Rocha E."/>
            <person name="Roche B."/>
            <person name="Rose M."/>
            <person name="Sadaie Y."/>
            <person name="Sato T."/>
            <person name="Scanlan E."/>
            <person name="Schleich S."/>
            <person name="Schroeter R."/>
            <person name="Scoffone F."/>
            <person name="Sekiguchi J."/>
            <person name="Sekowska A."/>
            <person name="Seror S.J."/>
            <person name="Serror P."/>
            <person name="Shin B.-S."/>
            <person name="Soldo B."/>
            <person name="Sorokin A."/>
            <person name="Tacconi E."/>
            <person name="Takagi T."/>
            <person name="Takahashi H."/>
            <person name="Takemaru K."/>
            <person name="Takeuchi M."/>
            <person name="Tamakoshi A."/>
            <person name="Tanaka T."/>
            <person name="Terpstra P."/>
            <person name="Tognoni A."/>
            <person name="Tosato V."/>
            <person name="Uchiyama S."/>
            <person name="Vandenbol M."/>
            <person name="Vannier F."/>
            <person name="Vassarotti A."/>
            <person name="Viari A."/>
            <person name="Wambutt R."/>
            <person name="Wedler E."/>
            <person name="Wedler H."/>
            <person name="Weitzenegger T."/>
            <person name="Winters P."/>
            <person name="Wipat A."/>
            <person name="Yamamoto H."/>
            <person name="Yamane K."/>
            <person name="Yasumoto K."/>
            <person name="Yata K."/>
            <person name="Yoshida K."/>
            <person name="Yoshikawa H.-F."/>
            <person name="Zumstein E."/>
            <person name="Yoshikawa H."/>
            <person name="Danchin A."/>
        </authorList>
    </citation>
    <scope>NUCLEOTIDE SEQUENCE [LARGE SCALE GENOMIC DNA]</scope>
    <source>
        <strain>168</strain>
    </source>
</reference>
<keyword id="KW-1003">Cell membrane</keyword>
<keyword id="KW-0472">Membrane</keyword>
<keyword id="KW-1185">Reference proteome</keyword>
<keyword id="KW-0677">Repeat</keyword>
<keyword id="KW-0812">Transmembrane</keyword>
<keyword id="KW-1133">Transmembrane helix</keyword>
<keyword id="KW-0813">Transport</keyword>
<feature type="chain" id="PRO_0000108183" description="Uncharacterized transporter YoaV">
    <location>
        <begin position="1"/>
        <end position="292"/>
    </location>
</feature>
<feature type="transmembrane region" description="Helical" evidence="1">
    <location>
        <begin position="6"/>
        <end position="26"/>
    </location>
</feature>
<feature type="transmembrane region" description="Helical" evidence="1">
    <location>
        <begin position="32"/>
        <end position="52"/>
    </location>
</feature>
<feature type="transmembrane region" description="Helical" evidence="1">
    <location>
        <begin position="68"/>
        <end position="88"/>
    </location>
</feature>
<feature type="transmembrane region" description="Helical" evidence="1">
    <location>
        <begin position="94"/>
        <end position="114"/>
    </location>
</feature>
<feature type="transmembrane region" description="Helical" evidence="1">
    <location>
        <begin position="123"/>
        <end position="143"/>
    </location>
</feature>
<feature type="transmembrane region" description="Helical" evidence="1">
    <location>
        <begin position="147"/>
        <end position="167"/>
    </location>
</feature>
<feature type="transmembrane region" description="Helical" evidence="1">
    <location>
        <begin position="182"/>
        <end position="202"/>
    </location>
</feature>
<feature type="transmembrane region" description="Helical" evidence="1">
    <location>
        <begin position="214"/>
        <end position="234"/>
    </location>
</feature>
<feature type="transmembrane region" description="Helical" evidence="1">
    <location>
        <begin position="242"/>
        <end position="262"/>
    </location>
</feature>
<feature type="transmembrane region" description="Helical" evidence="1">
    <location>
        <begin position="265"/>
        <end position="285"/>
    </location>
</feature>
<feature type="domain" description="EamA 1">
    <location>
        <begin position="13"/>
        <end position="137"/>
    </location>
</feature>
<feature type="domain" description="EamA 2">
    <location>
        <begin position="159"/>
        <end position="285"/>
    </location>
</feature>
<organism>
    <name type="scientific">Bacillus subtilis (strain 168)</name>
    <dbReference type="NCBI Taxonomy" id="224308"/>
    <lineage>
        <taxon>Bacteria</taxon>
        <taxon>Bacillati</taxon>
        <taxon>Bacillota</taxon>
        <taxon>Bacilli</taxon>
        <taxon>Bacillales</taxon>
        <taxon>Bacillaceae</taxon>
        <taxon>Bacillus</taxon>
    </lineage>
</organism>
<protein>
    <recommendedName>
        <fullName>Uncharacterized transporter YoaV</fullName>
    </recommendedName>
</protein>
<proteinExistence type="inferred from homology"/>
<evidence type="ECO:0000255" key="1"/>
<evidence type="ECO:0000305" key="2"/>
<gene>
    <name type="primary">yoaV</name>
    <name type="ordered locus">BSU18770</name>
</gene>
<accession>O34416</accession>
<sequence length="292" mass="33044">MVKVMLGIISVTLIWGYTWVAMKVGIHDIPPLLFSGLRLFIGAVPLFLILFIQRKKLSIQKEHLKSYIIMSLLMGLGYMGILTYGMQFVDSGKTSVLVYTMPIFVTVISHFSLNEKMNVYKTMGLVCGLFGLLFIFGKEMLNIDQSALFGELCVLVAALSWGIANVFSKLQFKHIDIIHMNAWHLMMGAVMLLVFSFIFEAVPSAEWTYQAVWSLLFNGLLSTGFTFVVWFWVLNQIQASKASMALMFVPVLALFFGWLQLHEQITINIILGALLICCGIFMNTFTFSRRKV</sequence>
<name>YOAV_BACSU</name>